<feature type="chain" id="PRO_1000140583" description="Small ribosomal subunit protein uS8">
    <location>
        <begin position="1"/>
        <end position="132"/>
    </location>
</feature>
<keyword id="KW-1185">Reference proteome</keyword>
<keyword id="KW-0687">Ribonucleoprotein</keyword>
<keyword id="KW-0689">Ribosomal protein</keyword>
<keyword id="KW-0694">RNA-binding</keyword>
<keyword id="KW-0699">rRNA-binding</keyword>
<gene>
    <name evidence="1" type="primary">rpsH</name>
    <name type="ordered locus">MMAR_1049</name>
</gene>
<protein>
    <recommendedName>
        <fullName evidence="1">Small ribosomal subunit protein uS8</fullName>
    </recommendedName>
    <alternativeName>
        <fullName evidence="2">30S ribosomal protein S8</fullName>
    </alternativeName>
</protein>
<accession>B2HCT5</accession>
<name>RS8_MYCMM</name>
<evidence type="ECO:0000255" key="1">
    <source>
        <dbReference type="HAMAP-Rule" id="MF_01302"/>
    </source>
</evidence>
<evidence type="ECO:0000305" key="2"/>
<comment type="function">
    <text evidence="1">One of the primary rRNA binding proteins, it binds directly to 16S rRNA central domain where it helps coordinate assembly of the platform of the 30S subunit.</text>
</comment>
<comment type="subunit">
    <text evidence="1">Part of the 30S ribosomal subunit. Contacts proteins S5 and S12.</text>
</comment>
<comment type="similarity">
    <text evidence="1">Belongs to the universal ribosomal protein uS8 family.</text>
</comment>
<dbReference type="EMBL" id="CP000854">
    <property type="protein sequence ID" value="ACC39507.1"/>
    <property type="molecule type" value="Genomic_DNA"/>
</dbReference>
<dbReference type="RefSeq" id="WP_011739073.1">
    <property type="nucleotide sequence ID" value="NC_010612.1"/>
</dbReference>
<dbReference type="SMR" id="B2HCT5"/>
<dbReference type="STRING" id="216594.MMAR_1049"/>
<dbReference type="GeneID" id="34339616"/>
<dbReference type="GeneID" id="93438583"/>
<dbReference type="KEGG" id="mmi:MMAR_1049"/>
<dbReference type="eggNOG" id="COG0096">
    <property type="taxonomic scope" value="Bacteria"/>
</dbReference>
<dbReference type="HOGENOM" id="CLU_098428_0_1_11"/>
<dbReference type="OrthoDB" id="9802617at2"/>
<dbReference type="Proteomes" id="UP000001190">
    <property type="component" value="Chromosome"/>
</dbReference>
<dbReference type="GO" id="GO:1990904">
    <property type="term" value="C:ribonucleoprotein complex"/>
    <property type="evidence" value="ECO:0007669"/>
    <property type="project" value="UniProtKB-KW"/>
</dbReference>
<dbReference type="GO" id="GO:0005840">
    <property type="term" value="C:ribosome"/>
    <property type="evidence" value="ECO:0007669"/>
    <property type="project" value="UniProtKB-KW"/>
</dbReference>
<dbReference type="GO" id="GO:0019843">
    <property type="term" value="F:rRNA binding"/>
    <property type="evidence" value="ECO:0007669"/>
    <property type="project" value="UniProtKB-UniRule"/>
</dbReference>
<dbReference type="GO" id="GO:0003735">
    <property type="term" value="F:structural constituent of ribosome"/>
    <property type="evidence" value="ECO:0007669"/>
    <property type="project" value="InterPro"/>
</dbReference>
<dbReference type="GO" id="GO:0006412">
    <property type="term" value="P:translation"/>
    <property type="evidence" value="ECO:0007669"/>
    <property type="project" value="UniProtKB-UniRule"/>
</dbReference>
<dbReference type="FunFam" id="3.30.1370.30:FF:000002">
    <property type="entry name" value="30S ribosomal protein S8"/>
    <property type="match status" value="1"/>
</dbReference>
<dbReference type="FunFam" id="3.30.1490.10:FF:000001">
    <property type="entry name" value="30S ribosomal protein S8"/>
    <property type="match status" value="1"/>
</dbReference>
<dbReference type="Gene3D" id="3.30.1370.30">
    <property type="match status" value="1"/>
</dbReference>
<dbReference type="Gene3D" id="3.30.1490.10">
    <property type="match status" value="1"/>
</dbReference>
<dbReference type="HAMAP" id="MF_01302_B">
    <property type="entry name" value="Ribosomal_uS8_B"/>
    <property type="match status" value="1"/>
</dbReference>
<dbReference type="InterPro" id="IPR000630">
    <property type="entry name" value="Ribosomal_uS8"/>
</dbReference>
<dbReference type="InterPro" id="IPR047863">
    <property type="entry name" value="Ribosomal_uS8_CS"/>
</dbReference>
<dbReference type="InterPro" id="IPR035987">
    <property type="entry name" value="Ribosomal_uS8_sf"/>
</dbReference>
<dbReference type="NCBIfam" id="NF001109">
    <property type="entry name" value="PRK00136.1"/>
    <property type="match status" value="1"/>
</dbReference>
<dbReference type="PANTHER" id="PTHR11758">
    <property type="entry name" value="40S RIBOSOMAL PROTEIN S15A"/>
    <property type="match status" value="1"/>
</dbReference>
<dbReference type="Pfam" id="PF00410">
    <property type="entry name" value="Ribosomal_S8"/>
    <property type="match status" value="1"/>
</dbReference>
<dbReference type="SUPFAM" id="SSF56047">
    <property type="entry name" value="Ribosomal protein S8"/>
    <property type="match status" value="1"/>
</dbReference>
<dbReference type="PROSITE" id="PS00053">
    <property type="entry name" value="RIBOSOMAL_S8"/>
    <property type="match status" value="1"/>
</dbReference>
<sequence>MTMTDPIADFLTRLRNANSAYHDEVSLPHSKIKANIAQILKNEGYISDFHTEDARVGKSLIVQLKYGPSRERSIAGLRRVSKPGLRVYAKSTNLPRVLGGLGVAIISTSSGLLTDRQAARQGVGGEVLAYVW</sequence>
<organism>
    <name type="scientific">Mycobacterium marinum (strain ATCC BAA-535 / M)</name>
    <dbReference type="NCBI Taxonomy" id="216594"/>
    <lineage>
        <taxon>Bacteria</taxon>
        <taxon>Bacillati</taxon>
        <taxon>Actinomycetota</taxon>
        <taxon>Actinomycetes</taxon>
        <taxon>Mycobacteriales</taxon>
        <taxon>Mycobacteriaceae</taxon>
        <taxon>Mycobacterium</taxon>
        <taxon>Mycobacterium ulcerans group</taxon>
    </lineage>
</organism>
<reference key="1">
    <citation type="journal article" date="2008" name="Genome Res.">
        <title>Insights from the complete genome sequence of Mycobacterium marinum on the evolution of Mycobacterium tuberculosis.</title>
        <authorList>
            <person name="Stinear T.P."/>
            <person name="Seemann T."/>
            <person name="Harrison P.F."/>
            <person name="Jenkin G.A."/>
            <person name="Davies J.K."/>
            <person name="Johnson P.D."/>
            <person name="Abdellah Z."/>
            <person name="Arrowsmith C."/>
            <person name="Chillingworth T."/>
            <person name="Churcher C."/>
            <person name="Clarke K."/>
            <person name="Cronin A."/>
            <person name="Davis P."/>
            <person name="Goodhead I."/>
            <person name="Holroyd N."/>
            <person name="Jagels K."/>
            <person name="Lord A."/>
            <person name="Moule S."/>
            <person name="Mungall K."/>
            <person name="Norbertczak H."/>
            <person name="Quail M.A."/>
            <person name="Rabbinowitsch E."/>
            <person name="Walker D."/>
            <person name="White B."/>
            <person name="Whitehead S."/>
            <person name="Small P.L."/>
            <person name="Brosch R."/>
            <person name="Ramakrishnan L."/>
            <person name="Fischbach M.A."/>
            <person name="Parkhill J."/>
            <person name="Cole S.T."/>
        </authorList>
    </citation>
    <scope>NUCLEOTIDE SEQUENCE [LARGE SCALE GENOMIC DNA]</scope>
    <source>
        <strain>ATCC BAA-535 / M</strain>
    </source>
</reference>
<proteinExistence type="inferred from homology"/>